<gene>
    <name type="ordered locus">At1g57720</name>
    <name type="ORF">T8L23.18</name>
</gene>
<sequence>MALVMHTYKGNKGANKALIAAEYAGVKIEESADFQMGVTNKSPEFLKMNPIGKVPVLETPEGPIFESNAIARYVSRKNGDNSLNGSSLIEYAHIEQWIDFSSLEIDANMLKWFAPRMGYAPFSAPAEEAAISALKRGLEALNTHLASNTFLVGHSVTLADIVTICNLNLGFATVMTKKFTSAFPHVERYFWTMVNQPEFKKVLGDAKQTEAVPPVPTKKAPQPAKPKEEPKKAAPVAEAPKPAEEEEAPKPKAKNPLDLLPPSPMVLDDWKRLYSNTKSNFREVAIKGFWDMYDPEGYSLWFCDYKYNDENMVSFVTLNKVGGFLQRMDLARKYSFGKMLICGSEGPFKVKGLWLFRGPEIPKFIMDEVYDMELYEWTKVDISDEAQKERVSQMIEDAEPFEGEALLDAKCFK</sequence>
<name>EF1G2_ARATH</name>
<reference key="1">
    <citation type="journal article" date="2000" name="Nature">
        <title>Sequence and analysis of chromosome 1 of the plant Arabidopsis thaliana.</title>
        <authorList>
            <person name="Theologis A."/>
            <person name="Ecker J.R."/>
            <person name="Palm C.J."/>
            <person name="Federspiel N.A."/>
            <person name="Kaul S."/>
            <person name="White O."/>
            <person name="Alonso J."/>
            <person name="Altafi H."/>
            <person name="Araujo R."/>
            <person name="Bowman C.L."/>
            <person name="Brooks S.Y."/>
            <person name="Buehler E."/>
            <person name="Chan A."/>
            <person name="Chao Q."/>
            <person name="Chen H."/>
            <person name="Cheuk R.F."/>
            <person name="Chin C.W."/>
            <person name="Chung M.K."/>
            <person name="Conn L."/>
            <person name="Conway A.B."/>
            <person name="Conway A.R."/>
            <person name="Creasy T.H."/>
            <person name="Dewar K."/>
            <person name="Dunn P."/>
            <person name="Etgu P."/>
            <person name="Feldblyum T.V."/>
            <person name="Feng J.-D."/>
            <person name="Fong B."/>
            <person name="Fujii C.Y."/>
            <person name="Gill J.E."/>
            <person name="Goldsmith A.D."/>
            <person name="Haas B."/>
            <person name="Hansen N.F."/>
            <person name="Hughes B."/>
            <person name="Huizar L."/>
            <person name="Hunter J.L."/>
            <person name="Jenkins J."/>
            <person name="Johnson-Hopson C."/>
            <person name="Khan S."/>
            <person name="Khaykin E."/>
            <person name="Kim C.J."/>
            <person name="Koo H.L."/>
            <person name="Kremenetskaia I."/>
            <person name="Kurtz D.B."/>
            <person name="Kwan A."/>
            <person name="Lam B."/>
            <person name="Langin-Hooper S."/>
            <person name="Lee A."/>
            <person name="Lee J.M."/>
            <person name="Lenz C.A."/>
            <person name="Li J.H."/>
            <person name="Li Y.-P."/>
            <person name="Lin X."/>
            <person name="Liu S.X."/>
            <person name="Liu Z.A."/>
            <person name="Luros J.S."/>
            <person name="Maiti R."/>
            <person name="Marziali A."/>
            <person name="Militscher J."/>
            <person name="Miranda M."/>
            <person name="Nguyen M."/>
            <person name="Nierman W.C."/>
            <person name="Osborne B.I."/>
            <person name="Pai G."/>
            <person name="Peterson J."/>
            <person name="Pham P.K."/>
            <person name="Rizzo M."/>
            <person name="Rooney T."/>
            <person name="Rowley D."/>
            <person name="Sakano H."/>
            <person name="Salzberg S.L."/>
            <person name="Schwartz J.R."/>
            <person name="Shinn P."/>
            <person name="Southwick A.M."/>
            <person name="Sun H."/>
            <person name="Tallon L.J."/>
            <person name="Tambunga G."/>
            <person name="Toriumi M.J."/>
            <person name="Town C.D."/>
            <person name="Utterback T."/>
            <person name="Van Aken S."/>
            <person name="Vaysberg M."/>
            <person name="Vysotskaia V.S."/>
            <person name="Walker M."/>
            <person name="Wu D."/>
            <person name="Yu G."/>
            <person name="Fraser C.M."/>
            <person name="Venter J.C."/>
            <person name="Davis R.W."/>
        </authorList>
    </citation>
    <scope>NUCLEOTIDE SEQUENCE [LARGE SCALE GENOMIC DNA]</scope>
    <source>
        <strain>cv. Columbia</strain>
    </source>
</reference>
<reference key="2">
    <citation type="journal article" date="2017" name="Plant J.">
        <title>Araport11: a complete reannotation of the Arabidopsis thaliana reference genome.</title>
        <authorList>
            <person name="Cheng C.Y."/>
            <person name="Krishnakumar V."/>
            <person name="Chan A.P."/>
            <person name="Thibaud-Nissen F."/>
            <person name="Schobel S."/>
            <person name="Town C.D."/>
        </authorList>
    </citation>
    <scope>GENOME REANNOTATION</scope>
    <source>
        <strain>cv. Columbia</strain>
    </source>
</reference>
<reference key="3">
    <citation type="journal article" date="2003" name="Science">
        <title>Empirical analysis of transcriptional activity in the Arabidopsis genome.</title>
        <authorList>
            <person name="Yamada K."/>
            <person name="Lim J."/>
            <person name="Dale J.M."/>
            <person name="Chen H."/>
            <person name="Shinn P."/>
            <person name="Palm C.J."/>
            <person name="Southwick A.M."/>
            <person name="Wu H.C."/>
            <person name="Kim C.J."/>
            <person name="Nguyen M."/>
            <person name="Pham P.K."/>
            <person name="Cheuk R.F."/>
            <person name="Karlin-Newmann G."/>
            <person name="Liu S.X."/>
            <person name="Lam B."/>
            <person name="Sakano H."/>
            <person name="Wu T."/>
            <person name="Yu G."/>
            <person name="Miranda M."/>
            <person name="Quach H.L."/>
            <person name="Tripp M."/>
            <person name="Chang C.H."/>
            <person name="Lee J.M."/>
            <person name="Toriumi M.J."/>
            <person name="Chan M.M."/>
            <person name="Tang C.C."/>
            <person name="Onodera C.S."/>
            <person name="Deng J.M."/>
            <person name="Akiyama K."/>
            <person name="Ansari Y."/>
            <person name="Arakawa T."/>
            <person name="Banh J."/>
            <person name="Banno F."/>
            <person name="Bowser L."/>
            <person name="Brooks S.Y."/>
            <person name="Carninci P."/>
            <person name="Chao Q."/>
            <person name="Choy N."/>
            <person name="Enju A."/>
            <person name="Goldsmith A.D."/>
            <person name="Gurjal M."/>
            <person name="Hansen N.F."/>
            <person name="Hayashizaki Y."/>
            <person name="Johnson-Hopson C."/>
            <person name="Hsuan V.W."/>
            <person name="Iida K."/>
            <person name="Karnes M."/>
            <person name="Khan S."/>
            <person name="Koesema E."/>
            <person name="Ishida J."/>
            <person name="Jiang P.X."/>
            <person name="Jones T."/>
            <person name="Kawai J."/>
            <person name="Kamiya A."/>
            <person name="Meyers C."/>
            <person name="Nakajima M."/>
            <person name="Narusaka M."/>
            <person name="Seki M."/>
            <person name="Sakurai T."/>
            <person name="Satou M."/>
            <person name="Tamse R."/>
            <person name="Vaysberg M."/>
            <person name="Wallender E.K."/>
            <person name="Wong C."/>
            <person name="Yamamura Y."/>
            <person name="Yuan S."/>
            <person name="Shinozaki K."/>
            <person name="Davis R.W."/>
            <person name="Theologis A."/>
            <person name="Ecker J.R."/>
        </authorList>
    </citation>
    <scope>NUCLEOTIDE SEQUENCE [LARGE SCALE MRNA]</scope>
    <source>
        <strain>cv. Columbia</strain>
    </source>
</reference>
<reference key="4">
    <citation type="submission" date="2002-03" db="EMBL/GenBank/DDBJ databases">
        <title>Full-length cDNA from Arabidopsis thaliana.</title>
        <authorList>
            <person name="Brover V.V."/>
            <person name="Troukhan M.E."/>
            <person name="Alexandrov N.A."/>
            <person name="Lu Y.-P."/>
            <person name="Flavell R.B."/>
            <person name="Feldmann K.A."/>
        </authorList>
    </citation>
    <scope>NUCLEOTIDE SEQUENCE [LARGE SCALE MRNA]</scope>
</reference>
<reference key="5">
    <citation type="journal article" date="2007" name="Mol. Cell. Proteomics">
        <title>Multidimensional protein identification technology (MudPIT) analysis of ubiquitinated proteins in plants.</title>
        <authorList>
            <person name="Maor R."/>
            <person name="Jones A."/>
            <person name="Nuehse T.S."/>
            <person name="Studholme D.J."/>
            <person name="Peck S.C."/>
            <person name="Shirasu K."/>
        </authorList>
    </citation>
    <scope>IDENTIFICATION BY MASS SPECTROMETRY [LARGE SCALE ANALYSIS]</scope>
    <source>
        <strain>cv. Landsberg erecta</strain>
    </source>
</reference>
<evidence type="ECO:0000250" key="1"/>
<evidence type="ECO:0000255" key="2">
    <source>
        <dbReference type="PROSITE-ProRule" id="PRU00519"/>
    </source>
</evidence>
<evidence type="ECO:0000256" key="3">
    <source>
        <dbReference type="SAM" id="MobiDB-lite"/>
    </source>
</evidence>
<evidence type="ECO:0000305" key="4"/>
<comment type="function">
    <text evidence="1">Probably plays a role in anchoring the complex to other cellular components.</text>
</comment>
<comment type="subunit">
    <text evidence="1">EF-1 is composed of four subunits: alpha, beta, delta, and gamma.</text>
</comment>
<accession>Q9FVT2</accession>
<accession>Q94C85</accession>
<keyword id="KW-0251">Elongation factor</keyword>
<keyword id="KW-0648">Protein biosynthesis</keyword>
<keyword id="KW-1185">Reference proteome</keyword>
<proteinExistence type="evidence at protein level"/>
<protein>
    <recommendedName>
        <fullName>Probable elongation factor 1-gamma 2</fullName>
        <shortName>EF-1-gamma 2</shortName>
    </recommendedName>
    <alternativeName>
        <fullName>eEF-1B gamma 2</fullName>
    </alternativeName>
</protein>
<organism>
    <name type="scientific">Arabidopsis thaliana</name>
    <name type="common">Mouse-ear cress</name>
    <dbReference type="NCBI Taxonomy" id="3702"/>
    <lineage>
        <taxon>Eukaryota</taxon>
        <taxon>Viridiplantae</taxon>
        <taxon>Streptophyta</taxon>
        <taxon>Embryophyta</taxon>
        <taxon>Tracheophyta</taxon>
        <taxon>Spermatophyta</taxon>
        <taxon>Magnoliopsida</taxon>
        <taxon>eudicotyledons</taxon>
        <taxon>Gunneridae</taxon>
        <taxon>Pentapetalae</taxon>
        <taxon>rosids</taxon>
        <taxon>malvids</taxon>
        <taxon>Brassicales</taxon>
        <taxon>Brassicaceae</taxon>
        <taxon>Camelineae</taxon>
        <taxon>Arabidopsis</taxon>
    </lineage>
</organism>
<dbReference type="EMBL" id="AC079733">
    <property type="protein sequence ID" value="AAG50755.1"/>
    <property type="molecule type" value="Genomic_DNA"/>
</dbReference>
<dbReference type="EMBL" id="CP002684">
    <property type="protein sequence ID" value="AEE33455.1"/>
    <property type="molecule type" value="Genomic_DNA"/>
</dbReference>
<dbReference type="EMBL" id="CP002684">
    <property type="protein sequence ID" value="AEE33456.1"/>
    <property type="molecule type" value="Genomic_DNA"/>
</dbReference>
<dbReference type="EMBL" id="BT000973">
    <property type="protein sequence ID" value="AAN41373.1"/>
    <property type="molecule type" value="mRNA"/>
</dbReference>
<dbReference type="EMBL" id="AY113043">
    <property type="protein sequence ID" value="AAM47351.1"/>
    <property type="molecule type" value="mRNA"/>
</dbReference>
<dbReference type="EMBL" id="AY064630">
    <property type="protein sequence ID" value="AAL47343.1"/>
    <property type="molecule type" value="mRNA"/>
</dbReference>
<dbReference type="EMBL" id="AF428347">
    <property type="protein sequence ID" value="AAL16277.1"/>
    <property type="molecule type" value="mRNA"/>
</dbReference>
<dbReference type="EMBL" id="AF424630">
    <property type="protein sequence ID" value="AAL11623.1"/>
    <property type="molecule type" value="mRNA"/>
</dbReference>
<dbReference type="EMBL" id="AF370502">
    <property type="protein sequence ID" value="AAK43879.1"/>
    <property type="molecule type" value="mRNA"/>
</dbReference>
<dbReference type="EMBL" id="AY035082">
    <property type="protein sequence ID" value="AAK59587.1"/>
    <property type="molecule type" value="mRNA"/>
</dbReference>
<dbReference type="EMBL" id="AY085256">
    <property type="protein sequence ID" value="AAM62488.1"/>
    <property type="molecule type" value="mRNA"/>
</dbReference>
<dbReference type="PIR" id="E96611">
    <property type="entry name" value="E96611"/>
</dbReference>
<dbReference type="RefSeq" id="NP_001031202.1">
    <property type="nucleotide sequence ID" value="NM_001036125.2"/>
</dbReference>
<dbReference type="RefSeq" id="NP_176084.1">
    <property type="nucleotide sequence ID" value="NM_104568.4"/>
</dbReference>
<dbReference type="SMR" id="Q9FVT2"/>
<dbReference type="BioGRID" id="27372">
    <property type="interactions" value="15"/>
</dbReference>
<dbReference type="FunCoup" id="Q9FVT2">
    <property type="interactions" value="3892"/>
</dbReference>
<dbReference type="IntAct" id="Q9FVT2">
    <property type="interactions" value="2"/>
</dbReference>
<dbReference type="STRING" id="3702.Q9FVT2"/>
<dbReference type="iPTMnet" id="Q9FVT2"/>
<dbReference type="PaxDb" id="3702-AT1G57720.1"/>
<dbReference type="ProteomicsDB" id="224742"/>
<dbReference type="EnsemblPlants" id="AT1G57720.1">
    <property type="protein sequence ID" value="AT1G57720.1"/>
    <property type="gene ID" value="AT1G57720"/>
</dbReference>
<dbReference type="EnsemblPlants" id="AT1G57720.2">
    <property type="protein sequence ID" value="AT1G57720.2"/>
    <property type="gene ID" value="AT1G57720"/>
</dbReference>
<dbReference type="GeneID" id="842147"/>
<dbReference type="Gramene" id="AT1G57720.1">
    <property type="protein sequence ID" value="AT1G57720.1"/>
    <property type="gene ID" value="AT1G57720"/>
</dbReference>
<dbReference type="Gramene" id="AT1G57720.2">
    <property type="protein sequence ID" value="AT1G57720.2"/>
    <property type="gene ID" value="AT1G57720"/>
</dbReference>
<dbReference type="KEGG" id="ath:AT1G57720"/>
<dbReference type="Araport" id="AT1G57720"/>
<dbReference type="TAIR" id="AT1G57720"/>
<dbReference type="eggNOG" id="KOG0867">
    <property type="taxonomic scope" value="Eukaryota"/>
</dbReference>
<dbReference type="eggNOG" id="KOG1627">
    <property type="taxonomic scope" value="Eukaryota"/>
</dbReference>
<dbReference type="HOGENOM" id="CLU_011226_3_0_1"/>
<dbReference type="InParanoid" id="Q9FVT2"/>
<dbReference type="OMA" id="YWIKQEE"/>
<dbReference type="PhylomeDB" id="Q9FVT2"/>
<dbReference type="CD-CODE" id="4299E36E">
    <property type="entry name" value="Nucleolus"/>
</dbReference>
<dbReference type="PRO" id="PR:Q9FVT2"/>
<dbReference type="Proteomes" id="UP000006548">
    <property type="component" value="Chromosome 1"/>
</dbReference>
<dbReference type="ExpressionAtlas" id="Q9FVT2">
    <property type="expression patterns" value="baseline and differential"/>
</dbReference>
<dbReference type="GO" id="GO:0005829">
    <property type="term" value="C:cytosol"/>
    <property type="evidence" value="ECO:0007005"/>
    <property type="project" value="TAIR"/>
</dbReference>
<dbReference type="GO" id="GO:0005634">
    <property type="term" value="C:nucleus"/>
    <property type="evidence" value="ECO:0007005"/>
    <property type="project" value="TAIR"/>
</dbReference>
<dbReference type="GO" id="GO:0009505">
    <property type="term" value="C:plant-type cell wall"/>
    <property type="evidence" value="ECO:0007005"/>
    <property type="project" value="TAIR"/>
</dbReference>
<dbReference type="GO" id="GO:0000325">
    <property type="term" value="C:plant-type vacuole"/>
    <property type="evidence" value="ECO:0007005"/>
    <property type="project" value="TAIR"/>
</dbReference>
<dbReference type="GO" id="GO:0009506">
    <property type="term" value="C:plasmodesma"/>
    <property type="evidence" value="ECO:0007005"/>
    <property type="project" value="TAIR"/>
</dbReference>
<dbReference type="GO" id="GO:0005507">
    <property type="term" value="F:copper ion binding"/>
    <property type="evidence" value="ECO:0007005"/>
    <property type="project" value="TAIR"/>
</dbReference>
<dbReference type="GO" id="GO:0004364">
    <property type="term" value="F:glutathione transferase activity"/>
    <property type="evidence" value="ECO:0007669"/>
    <property type="project" value="InterPro"/>
</dbReference>
<dbReference type="GO" id="GO:0003746">
    <property type="term" value="F:translation elongation factor activity"/>
    <property type="evidence" value="ECO:0007669"/>
    <property type="project" value="UniProtKB-KW"/>
</dbReference>
<dbReference type="GO" id="GO:0010043">
    <property type="term" value="P:response to zinc ion"/>
    <property type="evidence" value="ECO:0000270"/>
    <property type="project" value="TAIR"/>
</dbReference>
<dbReference type="CDD" id="cd03181">
    <property type="entry name" value="GST_C_EF1Bgamma_like"/>
    <property type="match status" value="1"/>
</dbReference>
<dbReference type="CDD" id="cd03044">
    <property type="entry name" value="GST_N_EF1Bgamma"/>
    <property type="match status" value="1"/>
</dbReference>
<dbReference type="FunFam" id="1.20.1050.10:FF:000006">
    <property type="entry name" value="Elongation factor 1 gamma"/>
    <property type="match status" value="1"/>
</dbReference>
<dbReference type="FunFam" id="3.30.70.1010:FF:000001">
    <property type="entry name" value="Elongation factor 1-gamma 1"/>
    <property type="match status" value="1"/>
</dbReference>
<dbReference type="FunFam" id="3.40.30.10:FF:000148">
    <property type="entry name" value="Elongation factor 1B gamma"/>
    <property type="match status" value="1"/>
</dbReference>
<dbReference type="Gene3D" id="1.20.1050.10">
    <property type="match status" value="1"/>
</dbReference>
<dbReference type="Gene3D" id="3.40.30.10">
    <property type="entry name" value="Glutaredoxin"/>
    <property type="match status" value="1"/>
</dbReference>
<dbReference type="Gene3D" id="3.30.70.1010">
    <property type="entry name" value="Translation elongation factor EF1B, gamma chain, conserved domain"/>
    <property type="match status" value="1"/>
</dbReference>
<dbReference type="InterPro" id="IPR044628">
    <property type="entry name" value="EF-1-gamma_plant"/>
</dbReference>
<dbReference type="InterPro" id="IPR001662">
    <property type="entry name" value="EF1B_G_C"/>
</dbReference>
<dbReference type="InterPro" id="IPR036433">
    <property type="entry name" value="EF1B_G_C_sf"/>
</dbReference>
<dbReference type="InterPro" id="IPR010987">
    <property type="entry name" value="Glutathione-S-Trfase_C-like"/>
</dbReference>
<dbReference type="InterPro" id="IPR036282">
    <property type="entry name" value="Glutathione-S-Trfase_C_sf"/>
</dbReference>
<dbReference type="InterPro" id="IPR040079">
    <property type="entry name" value="Glutathione_S-Trfase"/>
</dbReference>
<dbReference type="InterPro" id="IPR004045">
    <property type="entry name" value="Glutathione_S-Trfase_N"/>
</dbReference>
<dbReference type="InterPro" id="IPR004046">
    <property type="entry name" value="GST_C"/>
</dbReference>
<dbReference type="InterPro" id="IPR036249">
    <property type="entry name" value="Thioredoxin-like_sf"/>
</dbReference>
<dbReference type="PANTHER" id="PTHR44372">
    <property type="entry name" value="ELONGATION FACTOR 1-GAMMA 1-RELATED"/>
    <property type="match status" value="1"/>
</dbReference>
<dbReference type="PANTHER" id="PTHR44372:SF13">
    <property type="entry name" value="ELONGATION FACTOR 1-GAMMA 1-RELATED"/>
    <property type="match status" value="1"/>
</dbReference>
<dbReference type="Pfam" id="PF00647">
    <property type="entry name" value="EF1G"/>
    <property type="match status" value="1"/>
</dbReference>
<dbReference type="Pfam" id="PF00043">
    <property type="entry name" value="GST_C"/>
    <property type="match status" value="1"/>
</dbReference>
<dbReference type="Pfam" id="PF02798">
    <property type="entry name" value="GST_N"/>
    <property type="match status" value="1"/>
</dbReference>
<dbReference type="SFLD" id="SFLDS00019">
    <property type="entry name" value="Glutathione_Transferase_(cytos"/>
    <property type="match status" value="1"/>
</dbReference>
<dbReference type="SFLD" id="SFLDG00358">
    <property type="entry name" value="Main_(cytGST)"/>
    <property type="match status" value="1"/>
</dbReference>
<dbReference type="SMART" id="SM01183">
    <property type="entry name" value="EF1G"/>
    <property type="match status" value="1"/>
</dbReference>
<dbReference type="SUPFAM" id="SSF89942">
    <property type="entry name" value="eEF1-gamma domain"/>
    <property type="match status" value="1"/>
</dbReference>
<dbReference type="SUPFAM" id="SSF47616">
    <property type="entry name" value="GST C-terminal domain-like"/>
    <property type="match status" value="1"/>
</dbReference>
<dbReference type="SUPFAM" id="SSF52833">
    <property type="entry name" value="Thioredoxin-like"/>
    <property type="match status" value="1"/>
</dbReference>
<dbReference type="PROSITE" id="PS50040">
    <property type="entry name" value="EF1G_C"/>
    <property type="match status" value="1"/>
</dbReference>
<dbReference type="PROSITE" id="PS50405">
    <property type="entry name" value="GST_CTER"/>
    <property type="match status" value="1"/>
</dbReference>
<dbReference type="PROSITE" id="PS50404">
    <property type="entry name" value="GST_NTER"/>
    <property type="match status" value="1"/>
</dbReference>
<feature type="chain" id="PRO_0000208827" description="Probable elongation factor 1-gamma 2">
    <location>
        <begin position="1"/>
        <end position="413"/>
    </location>
</feature>
<feature type="domain" description="GST N-terminal">
    <location>
        <begin position="1"/>
        <end position="82"/>
    </location>
</feature>
<feature type="domain" description="GST C-terminal">
    <location>
        <begin position="87"/>
        <end position="215"/>
    </location>
</feature>
<feature type="domain" description="EF-1-gamma C-terminal" evidence="2">
    <location>
        <begin position="253"/>
        <end position="413"/>
    </location>
</feature>
<feature type="region of interest" description="Disordered" evidence="3">
    <location>
        <begin position="207"/>
        <end position="260"/>
    </location>
</feature>
<feature type="sequence conflict" description="In Ref. 3; AAK59587." evidence="4" ref="3">
    <original>K</original>
    <variation>E</variation>
    <location>
        <position position="178"/>
    </location>
</feature>